<reference key="1">
    <citation type="journal article" date="2016" name="Stand. Genomic Sci.">
        <title>Complete genome sequence of the Antarctic Halorubrum lacusprofundi type strain ACAM 34.</title>
        <authorList>
            <person name="Anderson I.J."/>
            <person name="DasSarma P."/>
            <person name="Lucas S."/>
            <person name="Copeland A."/>
            <person name="Lapidus A."/>
            <person name="Del Rio T.G."/>
            <person name="Tice H."/>
            <person name="Dalin E."/>
            <person name="Bruce D.C."/>
            <person name="Goodwin L."/>
            <person name="Pitluck S."/>
            <person name="Sims D."/>
            <person name="Brettin T.S."/>
            <person name="Detter J.C."/>
            <person name="Han C.S."/>
            <person name="Larimer F."/>
            <person name="Hauser L."/>
            <person name="Land M."/>
            <person name="Ivanova N."/>
            <person name="Richardson P."/>
            <person name="Cavicchioli R."/>
            <person name="DasSarma S."/>
            <person name="Woese C.R."/>
            <person name="Kyrpides N.C."/>
        </authorList>
    </citation>
    <scope>NUCLEOTIDE SEQUENCE [LARGE SCALE GENOMIC DNA]</scope>
    <source>
        <strain>ATCC 49239 / DSM 5036 / JCM 8891 / ACAM 34</strain>
    </source>
</reference>
<organism>
    <name type="scientific">Halorubrum lacusprofundi (strain ATCC 49239 / DSM 5036 / JCM 8891 / ACAM 34)</name>
    <dbReference type="NCBI Taxonomy" id="416348"/>
    <lineage>
        <taxon>Archaea</taxon>
        <taxon>Methanobacteriati</taxon>
        <taxon>Methanobacteriota</taxon>
        <taxon>Stenosarchaea group</taxon>
        <taxon>Halobacteria</taxon>
        <taxon>Halobacteriales</taxon>
        <taxon>Haloferacaceae</taxon>
        <taxon>Halorubrum</taxon>
    </lineage>
</organism>
<dbReference type="EC" id="2.7.1.23" evidence="1"/>
<dbReference type="EMBL" id="CP001365">
    <property type="protein sequence ID" value="ACM57246.1"/>
    <property type="molecule type" value="Genomic_DNA"/>
</dbReference>
<dbReference type="RefSeq" id="WP_015910384.1">
    <property type="nucleotide sequence ID" value="NC_012029.1"/>
</dbReference>
<dbReference type="SMR" id="B9LPF8"/>
<dbReference type="GeneID" id="7399612"/>
<dbReference type="KEGG" id="hla:Hlac_1661"/>
<dbReference type="eggNOG" id="arCOG01348">
    <property type="taxonomic scope" value="Archaea"/>
</dbReference>
<dbReference type="HOGENOM" id="CLU_008831_0_2_2"/>
<dbReference type="Proteomes" id="UP000000740">
    <property type="component" value="Chromosome 1"/>
</dbReference>
<dbReference type="GO" id="GO:0005737">
    <property type="term" value="C:cytoplasm"/>
    <property type="evidence" value="ECO:0007669"/>
    <property type="project" value="UniProtKB-SubCell"/>
</dbReference>
<dbReference type="GO" id="GO:0005524">
    <property type="term" value="F:ATP binding"/>
    <property type="evidence" value="ECO:0007669"/>
    <property type="project" value="UniProtKB-KW"/>
</dbReference>
<dbReference type="GO" id="GO:0046872">
    <property type="term" value="F:metal ion binding"/>
    <property type="evidence" value="ECO:0007669"/>
    <property type="project" value="UniProtKB-UniRule"/>
</dbReference>
<dbReference type="GO" id="GO:0003951">
    <property type="term" value="F:NAD+ kinase activity"/>
    <property type="evidence" value="ECO:0007669"/>
    <property type="project" value="UniProtKB-UniRule"/>
</dbReference>
<dbReference type="GO" id="GO:0019674">
    <property type="term" value="P:NAD metabolic process"/>
    <property type="evidence" value="ECO:0007669"/>
    <property type="project" value="InterPro"/>
</dbReference>
<dbReference type="GO" id="GO:0006741">
    <property type="term" value="P:NADP biosynthetic process"/>
    <property type="evidence" value="ECO:0007669"/>
    <property type="project" value="UniProtKB-UniRule"/>
</dbReference>
<dbReference type="Gene3D" id="3.40.50.10330">
    <property type="entry name" value="Probable inorganic polyphosphate/atp-NAD kinase, domain 1"/>
    <property type="match status" value="1"/>
</dbReference>
<dbReference type="Gene3D" id="2.60.200.30">
    <property type="entry name" value="Probable inorganic polyphosphate/atp-NAD kinase, domain 2"/>
    <property type="match status" value="1"/>
</dbReference>
<dbReference type="HAMAP" id="MF_00361">
    <property type="entry name" value="NAD_kinase"/>
    <property type="match status" value="1"/>
</dbReference>
<dbReference type="InterPro" id="IPR017438">
    <property type="entry name" value="ATP-NAD_kinase_N"/>
</dbReference>
<dbReference type="InterPro" id="IPR017437">
    <property type="entry name" value="ATP-NAD_kinase_PpnK-typ_C"/>
</dbReference>
<dbReference type="InterPro" id="IPR016064">
    <property type="entry name" value="NAD/diacylglycerol_kinase_sf"/>
</dbReference>
<dbReference type="InterPro" id="IPR002504">
    <property type="entry name" value="NADK"/>
</dbReference>
<dbReference type="PANTHER" id="PTHR20275:SF43">
    <property type="entry name" value="BIFUNCTIONAL NADP PHOSPHATASE_NAD KINASE"/>
    <property type="match status" value="1"/>
</dbReference>
<dbReference type="PANTHER" id="PTHR20275">
    <property type="entry name" value="NAD KINASE"/>
    <property type="match status" value="1"/>
</dbReference>
<dbReference type="Pfam" id="PF01513">
    <property type="entry name" value="NAD_kinase"/>
    <property type="match status" value="1"/>
</dbReference>
<dbReference type="Pfam" id="PF20143">
    <property type="entry name" value="NAD_kinase_C"/>
    <property type="match status" value="1"/>
</dbReference>
<dbReference type="SUPFAM" id="SSF111331">
    <property type="entry name" value="NAD kinase/diacylglycerol kinase-like"/>
    <property type="match status" value="1"/>
</dbReference>
<sequence length="275" mass="28022">MQVGIVARKGSERAVAVADELRDAVAGAGASVWLDAETADALGEPAAGREVDALADCDLAVAVGGDGTFLFVARNAGDTPIVGVNLGEVGFLNAVPPEAAEEAVVSEVEAFDRGEMNVREAPRLAARTDEWTSVPAANEVVIQGARRGPGAGIDYEVRVDGSRYAGGHADGVLVATPTGSTAYNLSEGGPLVHPAVSGLVVNEMVAEEGMPPIVVDADATVTVAVEGVDEVVVASDGRNVTTLPAPTEVTVERTTPPMRIAGPPSDFFAALEKLS</sequence>
<proteinExistence type="inferred from homology"/>
<comment type="function">
    <text evidence="1">Involved in the regulation of the intracellular balance of NAD and NADP, and is a key enzyme in the biosynthesis of NADP. Catalyzes specifically the phosphorylation on 2'-hydroxyl of the adenosine moiety of NAD to yield NADP.</text>
</comment>
<comment type="catalytic activity">
    <reaction evidence="1">
        <text>NAD(+) + ATP = ADP + NADP(+) + H(+)</text>
        <dbReference type="Rhea" id="RHEA:18629"/>
        <dbReference type="ChEBI" id="CHEBI:15378"/>
        <dbReference type="ChEBI" id="CHEBI:30616"/>
        <dbReference type="ChEBI" id="CHEBI:57540"/>
        <dbReference type="ChEBI" id="CHEBI:58349"/>
        <dbReference type="ChEBI" id="CHEBI:456216"/>
        <dbReference type="EC" id="2.7.1.23"/>
    </reaction>
</comment>
<comment type="cofactor">
    <cofactor evidence="1">
        <name>a divalent metal cation</name>
        <dbReference type="ChEBI" id="CHEBI:60240"/>
    </cofactor>
</comment>
<comment type="subcellular location">
    <subcellularLocation>
        <location evidence="1">Cytoplasm</location>
    </subcellularLocation>
</comment>
<comment type="similarity">
    <text evidence="1">Belongs to the NAD kinase family.</text>
</comment>
<name>NADK_HALLT</name>
<accession>B9LPF8</accession>
<feature type="chain" id="PRO_1000133574" description="NAD kinase">
    <location>
        <begin position="1"/>
        <end position="275"/>
    </location>
</feature>
<feature type="active site" description="Proton acceptor" evidence="1">
    <location>
        <position position="66"/>
    </location>
</feature>
<feature type="binding site" evidence="1">
    <location>
        <begin position="66"/>
        <end position="67"/>
    </location>
    <ligand>
        <name>NAD(+)</name>
        <dbReference type="ChEBI" id="CHEBI:57540"/>
    </ligand>
</feature>
<feature type="binding site" evidence="1">
    <location>
        <begin position="138"/>
        <end position="139"/>
    </location>
    <ligand>
        <name>NAD(+)</name>
        <dbReference type="ChEBI" id="CHEBI:57540"/>
    </ligand>
</feature>
<feature type="binding site" evidence="1">
    <location>
        <position position="168"/>
    </location>
    <ligand>
        <name>NAD(+)</name>
        <dbReference type="ChEBI" id="CHEBI:57540"/>
    </ligand>
</feature>
<feature type="binding site" evidence="1">
    <location>
        <position position="170"/>
    </location>
    <ligand>
        <name>NAD(+)</name>
        <dbReference type="ChEBI" id="CHEBI:57540"/>
    </ligand>
</feature>
<feature type="binding site" evidence="1">
    <location>
        <begin position="181"/>
        <end position="186"/>
    </location>
    <ligand>
        <name>NAD(+)</name>
        <dbReference type="ChEBI" id="CHEBI:57540"/>
    </ligand>
</feature>
<feature type="binding site" evidence="1">
    <location>
        <position position="205"/>
    </location>
    <ligand>
        <name>NAD(+)</name>
        <dbReference type="ChEBI" id="CHEBI:57540"/>
    </ligand>
</feature>
<gene>
    <name evidence="1" type="primary">nadK</name>
    <name type="ordered locus">Hlac_1661</name>
</gene>
<evidence type="ECO:0000255" key="1">
    <source>
        <dbReference type="HAMAP-Rule" id="MF_00361"/>
    </source>
</evidence>
<keyword id="KW-0067">ATP-binding</keyword>
<keyword id="KW-0963">Cytoplasm</keyword>
<keyword id="KW-0418">Kinase</keyword>
<keyword id="KW-0520">NAD</keyword>
<keyword id="KW-0521">NADP</keyword>
<keyword id="KW-0547">Nucleotide-binding</keyword>
<keyword id="KW-1185">Reference proteome</keyword>
<keyword id="KW-0808">Transferase</keyword>
<protein>
    <recommendedName>
        <fullName evidence="1">NAD kinase</fullName>
        <ecNumber evidence="1">2.7.1.23</ecNumber>
    </recommendedName>
    <alternativeName>
        <fullName evidence="1">ATP-dependent NAD kinase</fullName>
    </alternativeName>
</protein>